<evidence type="ECO:0000255" key="1">
    <source>
        <dbReference type="HAMAP-Rule" id="MF_00121"/>
    </source>
</evidence>
<gene>
    <name evidence="1" type="primary">gatB</name>
    <name type="ordered locus">SAV_2743</name>
</gene>
<accession>Q82JL2</accession>
<feature type="chain" id="PRO_0000148845" description="Aspartyl/glutamyl-tRNA(Asn/Gln) amidotransferase subunit B">
    <location>
        <begin position="1"/>
        <end position="505"/>
    </location>
</feature>
<dbReference type="EC" id="6.3.5.-" evidence="1"/>
<dbReference type="EMBL" id="BA000030">
    <property type="protein sequence ID" value="BAC70454.1"/>
    <property type="molecule type" value="Genomic_DNA"/>
</dbReference>
<dbReference type="RefSeq" id="WP_010984175.1">
    <property type="nucleotide sequence ID" value="NZ_JZJK01000071.1"/>
</dbReference>
<dbReference type="SMR" id="Q82JL2"/>
<dbReference type="GeneID" id="41539831"/>
<dbReference type="KEGG" id="sma:SAVERM_2743"/>
<dbReference type="eggNOG" id="COG0064">
    <property type="taxonomic scope" value="Bacteria"/>
</dbReference>
<dbReference type="HOGENOM" id="CLU_019240_0_0_11"/>
<dbReference type="OrthoDB" id="9804078at2"/>
<dbReference type="Proteomes" id="UP000000428">
    <property type="component" value="Chromosome"/>
</dbReference>
<dbReference type="GO" id="GO:0050566">
    <property type="term" value="F:asparaginyl-tRNA synthase (glutamine-hydrolyzing) activity"/>
    <property type="evidence" value="ECO:0007669"/>
    <property type="project" value="RHEA"/>
</dbReference>
<dbReference type="GO" id="GO:0005524">
    <property type="term" value="F:ATP binding"/>
    <property type="evidence" value="ECO:0007669"/>
    <property type="project" value="UniProtKB-KW"/>
</dbReference>
<dbReference type="GO" id="GO:0050567">
    <property type="term" value="F:glutaminyl-tRNA synthase (glutamine-hydrolyzing) activity"/>
    <property type="evidence" value="ECO:0007669"/>
    <property type="project" value="UniProtKB-UniRule"/>
</dbReference>
<dbReference type="GO" id="GO:0070681">
    <property type="term" value="P:glutaminyl-tRNAGln biosynthesis via transamidation"/>
    <property type="evidence" value="ECO:0007669"/>
    <property type="project" value="TreeGrafter"/>
</dbReference>
<dbReference type="GO" id="GO:0006412">
    <property type="term" value="P:translation"/>
    <property type="evidence" value="ECO:0007669"/>
    <property type="project" value="UniProtKB-UniRule"/>
</dbReference>
<dbReference type="FunFam" id="1.10.10.410:FF:000002">
    <property type="entry name" value="Aspartyl/glutamyl-tRNA(Asn/Gln) amidotransferase subunit B"/>
    <property type="match status" value="1"/>
</dbReference>
<dbReference type="Gene3D" id="1.10.10.410">
    <property type="match status" value="1"/>
</dbReference>
<dbReference type="HAMAP" id="MF_00121">
    <property type="entry name" value="GatB"/>
    <property type="match status" value="1"/>
</dbReference>
<dbReference type="InterPro" id="IPR017959">
    <property type="entry name" value="Asn/Gln-tRNA_amidoTrfase_suB/E"/>
</dbReference>
<dbReference type="InterPro" id="IPR006075">
    <property type="entry name" value="Asn/Gln-tRNA_Trfase_suB/E_cat"/>
</dbReference>
<dbReference type="InterPro" id="IPR018027">
    <property type="entry name" value="Asn/Gln_amidotransferase"/>
</dbReference>
<dbReference type="InterPro" id="IPR003789">
    <property type="entry name" value="Asn/Gln_tRNA_amidoTrase-B-like"/>
</dbReference>
<dbReference type="InterPro" id="IPR004413">
    <property type="entry name" value="GatB"/>
</dbReference>
<dbReference type="InterPro" id="IPR023168">
    <property type="entry name" value="GatB_Yqey_C_2"/>
</dbReference>
<dbReference type="InterPro" id="IPR017958">
    <property type="entry name" value="Gln-tRNA_amidoTrfase_suB_CS"/>
</dbReference>
<dbReference type="InterPro" id="IPR014746">
    <property type="entry name" value="Gln_synth/guanido_kin_cat_dom"/>
</dbReference>
<dbReference type="NCBIfam" id="TIGR00133">
    <property type="entry name" value="gatB"/>
    <property type="match status" value="1"/>
</dbReference>
<dbReference type="NCBIfam" id="NF004012">
    <property type="entry name" value="PRK05477.1-2"/>
    <property type="match status" value="1"/>
</dbReference>
<dbReference type="NCBIfam" id="NF004013">
    <property type="entry name" value="PRK05477.1-3"/>
    <property type="match status" value="1"/>
</dbReference>
<dbReference type="NCBIfam" id="NF004014">
    <property type="entry name" value="PRK05477.1-4"/>
    <property type="match status" value="1"/>
</dbReference>
<dbReference type="PANTHER" id="PTHR11659">
    <property type="entry name" value="GLUTAMYL-TRNA GLN AMIDOTRANSFERASE SUBUNIT B MITOCHONDRIAL AND PROKARYOTIC PET112-RELATED"/>
    <property type="match status" value="1"/>
</dbReference>
<dbReference type="PANTHER" id="PTHR11659:SF0">
    <property type="entry name" value="GLUTAMYL-TRNA(GLN) AMIDOTRANSFERASE SUBUNIT B, MITOCHONDRIAL"/>
    <property type="match status" value="1"/>
</dbReference>
<dbReference type="Pfam" id="PF02934">
    <property type="entry name" value="GatB_N"/>
    <property type="match status" value="1"/>
</dbReference>
<dbReference type="Pfam" id="PF02637">
    <property type="entry name" value="GatB_Yqey"/>
    <property type="match status" value="1"/>
</dbReference>
<dbReference type="SMART" id="SM00845">
    <property type="entry name" value="GatB_Yqey"/>
    <property type="match status" value="1"/>
</dbReference>
<dbReference type="SUPFAM" id="SSF89095">
    <property type="entry name" value="GatB/YqeY motif"/>
    <property type="match status" value="1"/>
</dbReference>
<dbReference type="SUPFAM" id="SSF55931">
    <property type="entry name" value="Glutamine synthetase/guanido kinase"/>
    <property type="match status" value="1"/>
</dbReference>
<dbReference type="PROSITE" id="PS01234">
    <property type="entry name" value="GATB"/>
    <property type="match status" value="1"/>
</dbReference>
<sequence length="505" mass="54515">MTTTTDELVSYEDALASYDPVMGLEVHVELGTKTKMFCGCSTELGAEPNSQTCPTCLGMPGALPVVNAIGVESAIKIGLALHCEIAEWCRFARKNYFYPDMPKNFQTSQYDEPIAFNGYLDVQLEDGEVFRVEIERAHMEEDTGKSTHVGGATGRIHGASHSLLDYNRAGIPLIEIVTKPIEGAGERAPEVAKAYVAELRELIRALGVSEARMEMGQMRCDVNLSLRPHGREKFGTRSETKNVNSLRSVERAARFEIQRHAAVLNSGGTIIQETRHFHEDTGSTTSGRVKEEAEDYRYFPEPDLVPVAPSRAWVEELRAGLPEQPLARRNRLREEWGVNAHDMQSILNAGAIDPIVATIEAGADAASARKWWMGELARSANESGKALEDLPITPAQVARVAQLVVAGELNDKLARQVIEGVLAGEGTPDEVVEKRGLKVVSDEGALTAAVDEAIAGNPGVADKIRGGKVAAAGALVGAVMKATRGQADAARVKELILEKLGVSEG</sequence>
<proteinExistence type="inferred from homology"/>
<reference key="1">
    <citation type="journal article" date="2001" name="Proc. Natl. Acad. Sci. U.S.A.">
        <title>Genome sequence of an industrial microorganism Streptomyces avermitilis: deducing the ability of producing secondary metabolites.</title>
        <authorList>
            <person name="Omura S."/>
            <person name="Ikeda H."/>
            <person name="Ishikawa J."/>
            <person name="Hanamoto A."/>
            <person name="Takahashi C."/>
            <person name="Shinose M."/>
            <person name="Takahashi Y."/>
            <person name="Horikawa H."/>
            <person name="Nakazawa H."/>
            <person name="Osonoe T."/>
            <person name="Kikuchi H."/>
            <person name="Shiba T."/>
            <person name="Sakaki Y."/>
            <person name="Hattori M."/>
        </authorList>
    </citation>
    <scope>NUCLEOTIDE SEQUENCE [LARGE SCALE GENOMIC DNA]</scope>
    <source>
        <strain>ATCC 31267 / DSM 46492 / JCM 5070 / NBRC 14893 / NCIMB 12804 / NRRL 8165 / MA-4680</strain>
    </source>
</reference>
<reference key="2">
    <citation type="journal article" date="2003" name="Nat. Biotechnol.">
        <title>Complete genome sequence and comparative analysis of the industrial microorganism Streptomyces avermitilis.</title>
        <authorList>
            <person name="Ikeda H."/>
            <person name="Ishikawa J."/>
            <person name="Hanamoto A."/>
            <person name="Shinose M."/>
            <person name="Kikuchi H."/>
            <person name="Shiba T."/>
            <person name="Sakaki Y."/>
            <person name="Hattori M."/>
            <person name="Omura S."/>
        </authorList>
    </citation>
    <scope>NUCLEOTIDE SEQUENCE [LARGE SCALE GENOMIC DNA]</scope>
    <source>
        <strain>ATCC 31267 / DSM 46492 / JCM 5070 / NBRC 14893 / NCIMB 12804 / NRRL 8165 / MA-4680</strain>
    </source>
</reference>
<organism>
    <name type="scientific">Streptomyces avermitilis (strain ATCC 31267 / DSM 46492 / JCM 5070 / NBRC 14893 / NCIMB 12804 / NRRL 8165 / MA-4680)</name>
    <dbReference type="NCBI Taxonomy" id="227882"/>
    <lineage>
        <taxon>Bacteria</taxon>
        <taxon>Bacillati</taxon>
        <taxon>Actinomycetota</taxon>
        <taxon>Actinomycetes</taxon>
        <taxon>Kitasatosporales</taxon>
        <taxon>Streptomycetaceae</taxon>
        <taxon>Streptomyces</taxon>
    </lineage>
</organism>
<comment type="function">
    <text evidence="1">Allows the formation of correctly charged Asn-tRNA(Asn) or Gln-tRNA(Gln) through the transamidation of misacylated Asp-tRNA(Asn) or Glu-tRNA(Gln) in organisms which lack either or both of asparaginyl-tRNA or glutaminyl-tRNA synthetases. The reaction takes place in the presence of glutamine and ATP through an activated phospho-Asp-tRNA(Asn) or phospho-Glu-tRNA(Gln).</text>
</comment>
<comment type="catalytic activity">
    <reaction evidence="1">
        <text>L-glutamyl-tRNA(Gln) + L-glutamine + ATP + H2O = L-glutaminyl-tRNA(Gln) + L-glutamate + ADP + phosphate + H(+)</text>
        <dbReference type="Rhea" id="RHEA:17521"/>
        <dbReference type="Rhea" id="RHEA-COMP:9681"/>
        <dbReference type="Rhea" id="RHEA-COMP:9684"/>
        <dbReference type="ChEBI" id="CHEBI:15377"/>
        <dbReference type="ChEBI" id="CHEBI:15378"/>
        <dbReference type="ChEBI" id="CHEBI:29985"/>
        <dbReference type="ChEBI" id="CHEBI:30616"/>
        <dbReference type="ChEBI" id="CHEBI:43474"/>
        <dbReference type="ChEBI" id="CHEBI:58359"/>
        <dbReference type="ChEBI" id="CHEBI:78520"/>
        <dbReference type="ChEBI" id="CHEBI:78521"/>
        <dbReference type="ChEBI" id="CHEBI:456216"/>
    </reaction>
</comment>
<comment type="catalytic activity">
    <reaction evidence="1">
        <text>L-aspartyl-tRNA(Asn) + L-glutamine + ATP + H2O = L-asparaginyl-tRNA(Asn) + L-glutamate + ADP + phosphate + 2 H(+)</text>
        <dbReference type="Rhea" id="RHEA:14513"/>
        <dbReference type="Rhea" id="RHEA-COMP:9674"/>
        <dbReference type="Rhea" id="RHEA-COMP:9677"/>
        <dbReference type="ChEBI" id="CHEBI:15377"/>
        <dbReference type="ChEBI" id="CHEBI:15378"/>
        <dbReference type="ChEBI" id="CHEBI:29985"/>
        <dbReference type="ChEBI" id="CHEBI:30616"/>
        <dbReference type="ChEBI" id="CHEBI:43474"/>
        <dbReference type="ChEBI" id="CHEBI:58359"/>
        <dbReference type="ChEBI" id="CHEBI:78515"/>
        <dbReference type="ChEBI" id="CHEBI:78516"/>
        <dbReference type="ChEBI" id="CHEBI:456216"/>
    </reaction>
</comment>
<comment type="subunit">
    <text evidence="1">Heterotrimer of A, B and C subunits.</text>
</comment>
<comment type="similarity">
    <text evidence="1">Belongs to the GatB/GatE family. GatB subfamily.</text>
</comment>
<keyword id="KW-0067">ATP-binding</keyword>
<keyword id="KW-0436">Ligase</keyword>
<keyword id="KW-0547">Nucleotide-binding</keyword>
<keyword id="KW-0648">Protein biosynthesis</keyword>
<keyword id="KW-1185">Reference proteome</keyword>
<protein>
    <recommendedName>
        <fullName evidence="1">Aspartyl/glutamyl-tRNA(Asn/Gln) amidotransferase subunit B</fullName>
        <shortName evidence="1">Asp/Glu-ADT subunit B</shortName>
        <ecNumber evidence="1">6.3.5.-</ecNumber>
    </recommendedName>
</protein>
<name>GATB_STRAW</name>